<evidence type="ECO:0000250" key="1"/>
<evidence type="ECO:0000255" key="2">
    <source>
        <dbReference type="HAMAP-Rule" id="MF_00223"/>
    </source>
</evidence>
<sequence length="222" mass="24831">MPSLSKEAALVHEALVARGLETPLRPPVHEMDNETRKSLIAGHMTEIMQLLNLDLADDSLMETPHRIAKMYVDEIFSGLDYANFPKITLIENKMKVDEMVTVRDITLTSTCEHHFVTIDGKATVAYIPKDSVIGLSKINRIVQFFAQRPQVQERLTQQILIALQTLLGTNNVAVSIDAVHYCVKARGIRDATSATTTTSLGGLFKSSQNTRHEFLRAVRHHN</sequence>
<name>GCH1_SHIF8</name>
<dbReference type="EC" id="3.5.4.16" evidence="2"/>
<dbReference type="EMBL" id="CP000266">
    <property type="protein sequence ID" value="ABF04344.1"/>
    <property type="molecule type" value="Genomic_DNA"/>
</dbReference>
<dbReference type="RefSeq" id="WP_001139613.1">
    <property type="nucleotide sequence ID" value="NC_008258.1"/>
</dbReference>
<dbReference type="SMR" id="Q0T2X1"/>
<dbReference type="GeneID" id="93775029"/>
<dbReference type="KEGG" id="sfv:SFV_2228"/>
<dbReference type="HOGENOM" id="CLU_049768_3_2_6"/>
<dbReference type="UniPathway" id="UPA00848">
    <property type="reaction ID" value="UER00151"/>
</dbReference>
<dbReference type="Proteomes" id="UP000000659">
    <property type="component" value="Chromosome"/>
</dbReference>
<dbReference type="GO" id="GO:0005737">
    <property type="term" value="C:cytoplasm"/>
    <property type="evidence" value="ECO:0007669"/>
    <property type="project" value="TreeGrafter"/>
</dbReference>
<dbReference type="GO" id="GO:0005525">
    <property type="term" value="F:GTP binding"/>
    <property type="evidence" value="ECO:0007669"/>
    <property type="project" value="UniProtKB-KW"/>
</dbReference>
<dbReference type="GO" id="GO:0003934">
    <property type="term" value="F:GTP cyclohydrolase I activity"/>
    <property type="evidence" value="ECO:0007669"/>
    <property type="project" value="UniProtKB-UniRule"/>
</dbReference>
<dbReference type="GO" id="GO:0008270">
    <property type="term" value="F:zinc ion binding"/>
    <property type="evidence" value="ECO:0007669"/>
    <property type="project" value="UniProtKB-UniRule"/>
</dbReference>
<dbReference type="GO" id="GO:0006730">
    <property type="term" value="P:one-carbon metabolic process"/>
    <property type="evidence" value="ECO:0007669"/>
    <property type="project" value="UniProtKB-UniRule"/>
</dbReference>
<dbReference type="GO" id="GO:0006729">
    <property type="term" value="P:tetrahydrobiopterin biosynthetic process"/>
    <property type="evidence" value="ECO:0007669"/>
    <property type="project" value="TreeGrafter"/>
</dbReference>
<dbReference type="GO" id="GO:0046654">
    <property type="term" value="P:tetrahydrofolate biosynthetic process"/>
    <property type="evidence" value="ECO:0007669"/>
    <property type="project" value="UniProtKB-UniRule"/>
</dbReference>
<dbReference type="CDD" id="cd00642">
    <property type="entry name" value="GTP_cyclohydro1"/>
    <property type="match status" value="1"/>
</dbReference>
<dbReference type="FunFam" id="1.10.286.10:FF:000002">
    <property type="entry name" value="GTP cyclohydrolase 1"/>
    <property type="match status" value="1"/>
</dbReference>
<dbReference type="FunFam" id="3.30.1130.10:FF:000001">
    <property type="entry name" value="GTP cyclohydrolase 1"/>
    <property type="match status" value="1"/>
</dbReference>
<dbReference type="Gene3D" id="1.10.286.10">
    <property type="match status" value="1"/>
</dbReference>
<dbReference type="Gene3D" id="3.30.1130.10">
    <property type="match status" value="1"/>
</dbReference>
<dbReference type="HAMAP" id="MF_00223">
    <property type="entry name" value="FolE"/>
    <property type="match status" value="1"/>
</dbReference>
<dbReference type="InterPro" id="IPR043133">
    <property type="entry name" value="GTP-CH-I_C/QueF"/>
</dbReference>
<dbReference type="InterPro" id="IPR043134">
    <property type="entry name" value="GTP-CH-I_N"/>
</dbReference>
<dbReference type="InterPro" id="IPR001474">
    <property type="entry name" value="GTP_CycHdrlase_I"/>
</dbReference>
<dbReference type="InterPro" id="IPR018234">
    <property type="entry name" value="GTP_CycHdrlase_I_CS"/>
</dbReference>
<dbReference type="InterPro" id="IPR020602">
    <property type="entry name" value="GTP_CycHdrlase_I_dom"/>
</dbReference>
<dbReference type="NCBIfam" id="TIGR00063">
    <property type="entry name" value="folE"/>
    <property type="match status" value="1"/>
</dbReference>
<dbReference type="NCBIfam" id="NF006824">
    <property type="entry name" value="PRK09347.1-1"/>
    <property type="match status" value="1"/>
</dbReference>
<dbReference type="NCBIfam" id="NF006826">
    <property type="entry name" value="PRK09347.1-3"/>
    <property type="match status" value="1"/>
</dbReference>
<dbReference type="PANTHER" id="PTHR11109:SF7">
    <property type="entry name" value="GTP CYCLOHYDROLASE 1"/>
    <property type="match status" value="1"/>
</dbReference>
<dbReference type="PANTHER" id="PTHR11109">
    <property type="entry name" value="GTP CYCLOHYDROLASE I"/>
    <property type="match status" value="1"/>
</dbReference>
<dbReference type="Pfam" id="PF01227">
    <property type="entry name" value="GTP_cyclohydroI"/>
    <property type="match status" value="1"/>
</dbReference>
<dbReference type="SUPFAM" id="SSF55620">
    <property type="entry name" value="Tetrahydrobiopterin biosynthesis enzymes-like"/>
    <property type="match status" value="1"/>
</dbReference>
<dbReference type="PROSITE" id="PS00859">
    <property type="entry name" value="GTP_CYCLOHYDROL_1_1"/>
    <property type="match status" value="1"/>
</dbReference>
<dbReference type="PROSITE" id="PS00860">
    <property type="entry name" value="GTP_CYCLOHYDROL_1_2"/>
    <property type="match status" value="1"/>
</dbReference>
<keyword id="KW-0342">GTP-binding</keyword>
<keyword id="KW-0378">Hydrolase</keyword>
<keyword id="KW-0479">Metal-binding</keyword>
<keyword id="KW-0547">Nucleotide-binding</keyword>
<keyword id="KW-0554">One-carbon metabolism</keyword>
<keyword id="KW-0862">Zinc</keyword>
<protein>
    <recommendedName>
        <fullName evidence="2">GTP cyclohydrolase 1</fullName>
        <ecNumber evidence="2">3.5.4.16</ecNumber>
    </recommendedName>
    <alternativeName>
        <fullName evidence="2">GTP cyclohydrolase I</fullName>
        <shortName evidence="2">GTP-CH-I</shortName>
    </alternativeName>
</protein>
<proteinExistence type="inferred from homology"/>
<reference key="1">
    <citation type="journal article" date="2006" name="BMC Genomics">
        <title>Complete genome sequence of Shigella flexneri 5b and comparison with Shigella flexneri 2a.</title>
        <authorList>
            <person name="Nie H."/>
            <person name="Yang F."/>
            <person name="Zhang X."/>
            <person name="Yang J."/>
            <person name="Chen L."/>
            <person name="Wang J."/>
            <person name="Xiong Z."/>
            <person name="Peng J."/>
            <person name="Sun L."/>
            <person name="Dong J."/>
            <person name="Xue Y."/>
            <person name="Xu X."/>
            <person name="Chen S."/>
            <person name="Yao Z."/>
            <person name="Shen Y."/>
            <person name="Jin Q."/>
        </authorList>
    </citation>
    <scope>NUCLEOTIDE SEQUENCE [LARGE SCALE GENOMIC DNA]</scope>
    <source>
        <strain>8401</strain>
    </source>
</reference>
<gene>
    <name evidence="2" type="primary">folE</name>
    <name type="ordered locus">SFV_2228</name>
</gene>
<feature type="chain" id="PRO_1000043740" description="GTP cyclohydrolase 1">
    <location>
        <begin position="1"/>
        <end position="222"/>
    </location>
</feature>
<feature type="binding site" evidence="2">
    <location>
        <position position="111"/>
    </location>
    <ligand>
        <name>Zn(2+)</name>
        <dbReference type="ChEBI" id="CHEBI:29105"/>
    </ligand>
</feature>
<feature type="binding site" evidence="2">
    <location>
        <position position="114"/>
    </location>
    <ligand>
        <name>Zn(2+)</name>
        <dbReference type="ChEBI" id="CHEBI:29105"/>
    </ligand>
</feature>
<feature type="binding site" evidence="2">
    <location>
        <position position="182"/>
    </location>
    <ligand>
        <name>Zn(2+)</name>
        <dbReference type="ChEBI" id="CHEBI:29105"/>
    </ligand>
</feature>
<comment type="catalytic activity">
    <reaction evidence="2">
        <text>GTP + H2O = 7,8-dihydroneopterin 3'-triphosphate + formate + H(+)</text>
        <dbReference type="Rhea" id="RHEA:17473"/>
        <dbReference type="ChEBI" id="CHEBI:15377"/>
        <dbReference type="ChEBI" id="CHEBI:15378"/>
        <dbReference type="ChEBI" id="CHEBI:15740"/>
        <dbReference type="ChEBI" id="CHEBI:37565"/>
        <dbReference type="ChEBI" id="CHEBI:58462"/>
        <dbReference type="EC" id="3.5.4.16"/>
    </reaction>
</comment>
<comment type="pathway">
    <text evidence="2">Cofactor biosynthesis; 7,8-dihydroneopterin triphosphate biosynthesis; 7,8-dihydroneopterin triphosphate from GTP: step 1/1.</text>
</comment>
<comment type="subunit">
    <text evidence="1">Toroid-shaped homodecamer, composed of two pentamers of five dimers.</text>
</comment>
<comment type="similarity">
    <text evidence="2">Belongs to the GTP cyclohydrolase I family.</text>
</comment>
<organism>
    <name type="scientific">Shigella flexneri serotype 5b (strain 8401)</name>
    <dbReference type="NCBI Taxonomy" id="373384"/>
    <lineage>
        <taxon>Bacteria</taxon>
        <taxon>Pseudomonadati</taxon>
        <taxon>Pseudomonadota</taxon>
        <taxon>Gammaproteobacteria</taxon>
        <taxon>Enterobacterales</taxon>
        <taxon>Enterobacteriaceae</taxon>
        <taxon>Shigella</taxon>
    </lineage>
</organism>
<accession>Q0T2X1</accession>